<protein>
    <recommendedName>
        <fullName>Probable cinnamyl alcohol dehydrogenase 2</fullName>
        <shortName>CAD 2</shortName>
        <ecNumber evidence="1">1.1.1.195</ecNumber>
    </recommendedName>
</protein>
<dbReference type="EC" id="1.1.1.195" evidence="1"/>
<dbReference type="EMBL" id="AJ001924">
    <property type="protein sequence ID" value="CAA05095.1"/>
    <property type="molecule type" value="Genomic_DNA"/>
</dbReference>
<dbReference type="SMR" id="O82035"/>
<dbReference type="UniPathway" id="UPA00711"/>
<dbReference type="GO" id="GO:0045551">
    <property type="term" value="F:cinnamyl-alcohol dehydrogenase activity"/>
    <property type="evidence" value="ECO:0007669"/>
    <property type="project" value="UniProtKB-EC"/>
</dbReference>
<dbReference type="GO" id="GO:0050268">
    <property type="term" value="F:coniferyl-alcohol dehydrogenase activity"/>
    <property type="evidence" value="ECO:0007669"/>
    <property type="project" value="RHEA"/>
</dbReference>
<dbReference type="GO" id="GO:0008270">
    <property type="term" value="F:zinc ion binding"/>
    <property type="evidence" value="ECO:0007669"/>
    <property type="project" value="InterPro"/>
</dbReference>
<dbReference type="GO" id="GO:0009809">
    <property type="term" value="P:lignin biosynthetic process"/>
    <property type="evidence" value="ECO:0007669"/>
    <property type="project" value="UniProtKB-KW"/>
</dbReference>
<dbReference type="CDD" id="cd05283">
    <property type="entry name" value="CAD1"/>
    <property type="match status" value="1"/>
</dbReference>
<dbReference type="FunFam" id="3.40.50.720:FF:000022">
    <property type="entry name" value="Cinnamyl alcohol dehydrogenase"/>
    <property type="match status" value="1"/>
</dbReference>
<dbReference type="FunFam" id="3.90.180.10:FF:000004">
    <property type="entry name" value="probable cinnamyl alcohol dehydrogenase"/>
    <property type="match status" value="1"/>
</dbReference>
<dbReference type="FunFam" id="3.90.180.10:FF:000100">
    <property type="entry name" value="Putative cinnamyl alcohol dehydrogenase 6"/>
    <property type="match status" value="1"/>
</dbReference>
<dbReference type="Gene3D" id="3.90.180.10">
    <property type="entry name" value="Medium-chain alcohol dehydrogenases, catalytic domain"/>
    <property type="match status" value="1"/>
</dbReference>
<dbReference type="Gene3D" id="3.40.50.720">
    <property type="entry name" value="NAD(P)-binding Rossmann-like Domain"/>
    <property type="match status" value="1"/>
</dbReference>
<dbReference type="InterPro" id="IPR013149">
    <property type="entry name" value="ADH-like_C"/>
</dbReference>
<dbReference type="InterPro" id="IPR013154">
    <property type="entry name" value="ADH-like_N"/>
</dbReference>
<dbReference type="InterPro" id="IPR002328">
    <property type="entry name" value="ADH_Zn_CS"/>
</dbReference>
<dbReference type="InterPro" id="IPR047109">
    <property type="entry name" value="CAD-like"/>
</dbReference>
<dbReference type="InterPro" id="IPR011032">
    <property type="entry name" value="GroES-like_sf"/>
</dbReference>
<dbReference type="InterPro" id="IPR036291">
    <property type="entry name" value="NAD(P)-bd_dom_sf"/>
</dbReference>
<dbReference type="InterPro" id="IPR020843">
    <property type="entry name" value="PKS_ER"/>
</dbReference>
<dbReference type="PANTHER" id="PTHR42683">
    <property type="entry name" value="ALDEHYDE REDUCTASE"/>
    <property type="match status" value="1"/>
</dbReference>
<dbReference type="Pfam" id="PF08240">
    <property type="entry name" value="ADH_N"/>
    <property type="match status" value="1"/>
</dbReference>
<dbReference type="Pfam" id="PF00107">
    <property type="entry name" value="ADH_zinc_N"/>
    <property type="match status" value="1"/>
</dbReference>
<dbReference type="SMART" id="SM00829">
    <property type="entry name" value="PKS_ER"/>
    <property type="match status" value="1"/>
</dbReference>
<dbReference type="SUPFAM" id="SSF50129">
    <property type="entry name" value="GroES-like"/>
    <property type="match status" value="1"/>
</dbReference>
<dbReference type="SUPFAM" id="SSF51735">
    <property type="entry name" value="NAD(P)-binding Rossmann-fold domains"/>
    <property type="match status" value="1"/>
</dbReference>
<dbReference type="PROSITE" id="PS00059">
    <property type="entry name" value="ADH_ZINC"/>
    <property type="match status" value="1"/>
</dbReference>
<gene>
    <name type="primary">CAD2</name>
</gene>
<name>CADH2_PICAB</name>
<accession>O82035</accession>
<keyword id="KW-0438">Lignin biosynthesis</keyword>
<keyword id="KW-0479">Metal-binding</keyword>
<keyword id="KW-0521">NADP</keyword>
<keyword id="KW-0560">Oxidoreductase</keyword>
<keyword id="KW-0862">Zinc</keyword>
<sequence>MGSLESEKTVTGYAARDSSGHLSPYTYTLRNKGPEDVIVRVIYCGICHSDLVQMHNEMGMSNYPMVPGHEVVGVVTEIGSEVKKFKVGEHVGVGCIVGSCRSCSNCNGSMEQYCSKRIWTYNDVNHDGTPTQGGFASSMVVDQMFVVRIPENLPLEQAAPLLCAGVTVYSPMKHFGMTEPGKKCGILGLGGVGHMGVKIAKAFGLHVTVISSSDKKKEEALEVLGADAYLVSKDAEKMQEAAESLDYIMDTIPVAHPLEPYLALLKTNGKLVMLGVVPEPLHFVTPLLILGRRSIAGSFIGSMEETQETLDFCAEKKVSSMIEVVGLDYINTAMERLVKNDVRYRFVVDVARSNLDK</sequence>
<reference key="1">
    <citation type="journal article" date="1998" name="Trees">
        <title>The cinnamyl alcohol dehydrogenase gene family in Picea abies (L.) Karst.: genomic sequences, Southern hybridization, genetic analysis and phylogenetic relationships.</title>
        <authorList>
            <person name="Schubert R."/>
            <person name="Sperisen C."/>
            <person name="Mueller-Starck G."/>
            <person name="La Scala S."/>
            <person name="Ernst D."/>
            <person name="Sandermann H. Jr."/>
            <person name="Haeger K.-P."/>
        </authorList>
    </citation>
    <scope>NUCLEOTIDE SEQUENCE [GENOMIC DNA]</scope>
</reference>
<organism>
    <name type="scientific">Picea abies</name>
    <name type="common">Norway spruce</name>
    <name type="synonym">Picea excelsa</name>
    <dbReference type="NCBI Taxonomy" id="3329"/>
    <lineage>
        <taxon>Eukaryota</taxon>
        <taxon>Viridiplantae</taxon>
        <taxon>Streptophyta</taxon>
        <taxon>Embryophyta</taxon>
        <taxon>Tracheophyta</taxon>
        <taxon>Spermatophyta</taxon>
        <taxon>Pinopsida</taxon>
        <taxon>Pinidae</taxon>
        <taxon>Conifers I</taxon>
        <taxon>Pinales</taxon>
        <taxon>Pinaceae</taxon>
        <taxon>Picea</taxon>
    </lineage>
</organism>
<proteinExistence type="inferred from homology"/>
<feature type="chain" id="PRO_0000160799" description="Probable cinnamyl alcohol dehydrogenase 2">
    <location>
        <begin position="1"/>
        <end position="357"/>
    </location>
</feature>
<feature type="binding site" evidence="1">
    <location>
        <position position="47"/>
    </location>
    <ligand>
        <name>Zn(2+)</name>
        <dbReference type="ChEBI" id="CHEBI:29105"/>
        <label>1</label>
        <note>catalytic</note>
    </ligand>
</feature>
<feature type="binding site" evidence="1">
    <location>
        <position position="49"/>
    </location>
    <ligand>
        <name>NADP(+)</name>
        <dbReference type="ChEBI" id="CHEBI:58349"/>
    </ligand>
</feature>
<feature type="binding site" evidence="1">
    <location>
        <position position="69"/>
    </location>
    <ligand>
        <name>Zn(2+)</name>
        <dbReference type="ChEBI" id="CHEBI:29105"/>
        <label>1</label>
        <note>catalytic</note>
    </ligand>
</feature>
<feature type="binding site" evidence="1">
    <location>
        <position position="70"/>
    </location>
    <ligand>
        <name>Zn(2+)</name>
        <dbReference type="ChEBI" id="CHEBI:29105"/>
        <label>1</label>
        <note>catalytic</note>
    </ligand>
</feature>
<feature type="binding site" evidence="1">
    <location>
        <position position="100"/>
    </location>
    <ligand>
        <name>Zn(2+)</name>
        <dbReference type="ChEBI" id="CHEBI:29105"/>
        <label>2</label>
    </ligand>
</feature>
<feature type="binding site" evidence="1">
    <location>
        <position position="103"/>
    </location>
    <ligand>
        <name>Zn(2+)</name>
        <dbReference type="ChEBI" id="CHEBI:29105"/>
        <label>2</label>
    </ligand>
</feature>
<feature type="binding site" evidence="1">
    <location>
        <position position="106"/>
    </location>
    <ligand>
        <name>Zn(2+)</name>
        <dbReference type="ChEBI" id="CHEBI:29105"/>
        <label>2</label>
    </ligand>
</feature>
<feature type="binding site" evidence="1">
    <location>
        <position position="114"/>
    </location>
    <ligand>
        <name>Zn(2+)</name>
        <dbReference type="ChEBI" id="CHEBI:29105"/>
        <label>2</label>
    </ligand>
</feature>
<feature type="binding site" evidence="1">
    <location>
        <position position="163"/>
    </location>
    <ligand>
        <name>Zn(2+)</name>
        <dbReference type="ChEBI" id="CHEBI:29105"/>
        <label>1</label>
        <note>catalytic</note>
    </ligand>
</feature>
<feature type="binding site" evidence="1">
    <location>
        <position position="167"/>
    </location>
    <ligand>
        <name>NADP(+)</name>
        <dbReference type="ChEBI" id="CHEBI:58349"/>
    </ligand>
</feature>
<feature type="binding site" evidence="1">
    <location>
        <begin position="188"/>
        <end position="193"/>
    </location>
    <ligand>
        <name>NADP(+)</name>
        <dbReference type="ChEBI" id="CHEBI:58349"/>
    </ligand>
</feature>
<feature type="binding site" evidence="1">
    <location>
        <begin position="211"/>
        <end position="216"/>
    </location>
    <ligand>
        <name>NADP(+)</name>
        <dbReference type="ChEBI" id="CHEBI:58349"/>
    </ligand>
</feature>
<feature type="binding site" evidence="1">
    <location>
        <position position="251"/>
    </location>
    <ligand>
        <name>NADP(+)</name>
        <dbReference type="ChEBI" id="CHEBI:58349"/>
    </ligand>
</feature>
<feature type="binding site" evidence="1">
    <location>
        <position position="275"/>
    </location>
    <ligand>
        <name>NADP(+)</name>
        <dbReference type="ChEBI" id="CHEBI:58349"/>
    </ligand>
</feature>
<feature type="binding site" evidence="1">
    <location>
        <begin position="298"/>
        <end position="300"/>
    </location>
    <ligand>
        <name>NADP(+)</name>
        <dbReference type="ChEBI" id="CHEBI:58349"/>
    </ligand>
</feature>
<evidence type="ECO:0000250" key="1">
    <source>
        <dbReference type="UniProtKB" id="O49482"/>
    </source>
</evidence>
<evidence type="ECO:0000305" key="2"/>
<comment type="function">
    <text evidence="1">Involved in lignin biosynthesis. Catalyzes the final step specific for the production of lignin monomers. Catalyzes the NADPH-dependent reduction of coniferaldehyde, 5-hydroxyconiferaldehyde, sinapaldehyde, 4-coumaraldehyde and caffeyl aldehyde to their respective alcohols.</text>
</comment>
<comment type="catalytic activity">
    <reaction evidence="1">
        <text>(E)-cinnamyl alcohol + NADP(+) = (E)-cinnamaldehyde + NADPH + H(+)</text>
        <dbReference type="Rhea" id="RHEA:10392"/>
        <dbReference type="ChEBI" id="CHEBI:15378"/>
        <dbReference type="ChEBI" id="CHEBI:16731"/>
        <dbReference type="ChEBI" id="CHEBI:33227"/>
        <dbReference type="ChEBI" id="CHEBI:57783"/>
        <dbReference type="ChEBI" id="CHEBI:58349"/>
        <dbReference type="EC" id="1.1.1.195"/>
    </reaction>
    <physiologicalReaction direction="right-to-left" evidence="1">
        <dbReference type="Rhea" id="RHEA:10394"/>
    </physiologicalReaction>
</comment>
<comment type="catalytic activity">
    <reaction evidence="1">
        <text>(E)-coniferol + NADP(+) = (E)-coniferaldehyde + NADPH + H(+)</text>
        <dbReference type="Rhea" id="RHEA:22444"/>
        <dbReference type="ChEBI" id="CHEBI:15378"/>
        <dbReference type="ChEBI" id="CHEBI:16547"/>
        <dbReference type="ChEBI" id="CHEBI:17745"/>
        <dbReference type="ChEBI" id="CHEBI:57783"/>
        <dbReference type="ChEBI" id="CHEBI:58349"/>
        <dbReference type="EC" id="1.1.1.195"/>
    </reaction>
    <physiologicalReaction direction="right-to-left" evidence="1">
        <dbReference type="Rhea" id="RHEA:22446"/>
    </physiologicalReaction>
</comment>
<comment type="catalytic activity">
    <reaction evidence="1">
        <text>(E)-sinapyl alcohol + NADP(+) = (E)-sinapaldehyde + NADPH + H(+)</text>
        <dbReference type="Rhea" id="RHEA:45704"/>
        <dbReference type="ChEBI" id="CHEBI:15378"/>
        <dbReference type="ChEBI" id="CHEBI:27949"/>
        <dbReference type="ChEBI" id="CHEBI:57783"/>
        <dbReference type="ChEBI" id="CHEBI:58349"/>
        <dbReference type="ChEBI" id="CHEBI:64557"/>
        <dbReference type="EC" id="1.1.1.195"/>
    </reaction>
    <physiologicalReaction direction="right-to-left" evidence="1">
        <dbReference type="Rhea" id="RHEA:45706"/>
    </physiologicalReaction>
</comment>
<comment type="catalytic activity">
    <reaction evidence="1">
        <text>(E)-4-coumaroyl alcohol + NADP(+) = (E)-4-coumaraldehyde + NADPH + H(+)</text>
        <dbReference type="Rhea" id="RHEA:45724"/>
        <dbReference type="ChEBI" id="CHEBI:15378"/>
        <dbReference type="ChEBI" id="CHEBI:28353"/>
        <dbReference type="ChEBI" id="CHEBI:57783"/>
        <dbReference type="ChEBI" id="CHEBI:58349"/>
        <dbReference type="ChEBI" id="CHEBI:64555"/>
        <dbReference type="EC" id="1.1.1.195"/>
    </reaction>
    <physiologicalReaction direction="right-to-left" evidence="1">
        <dbReference type="Rhea" id="RHEA:45726"/>
    </physiologicalReaction>
</comment>
<comment type="catalytic activity">
    <reaction evidence="1">
        <text>(E)-caffeyl alcohol + NADP(+) = (E)-caffeyl aldehyde + NADPH + H(+)</text>
        <dbReference type="Rhea" id="RHEA:45728"/>
        <dbReference type="ChEBI" id="CHEBI:15378"/>
        <dbReference type="ChEBI" id="CHEBI:28323"/>
        <dbReference type="ChEBI" id="CHEBI:31334"/>
        <dbReference type="ChEBI" id="CHEBI:57783"/>
        <dbReference type="ChEBI" id="CHEBI:58349"/>
    </reaction>
    <physiologicalReaction direction="right-to-left" evidence="1">
        <dbReference type="Rhea" id="RHEA:45730"/>
    </physiologicalReaction>
</comment>
<comment type="cofactor">
    <cofactor evidence="1">
        <name>Zn(2+)</name>
        <dbReference type="ChEBI" id="CHEBI:29105"/>
    </cofactor>
    <text evidence="1">Binds 2 Zn(2+) ions per subunit.</text>
</comment>
<comment type="pathway">
    <text evidence="1">Aromatic compound metabolism; phenylpropanoid biosynthesis.</text>
</comment>
<comment type="subunit">
    <text evidence="1">Homodimer.</text>
</comment>
<comment type="similarity">
    <text evidence="2">Belongs to the zinc-containing alcohol dehydrogenase family.</text>
</comment>